<accession>Q6CUC3</accession>
<dbReference type="EMBL" id="CR382123">
    <property type="protein sequence ID" value="CAH01317.1"/>
    <property type="molecule type" value="Genomic_DNA"/>
</dbReference>
<dbReference type="RefSeq" id="XP_452466.1">
    <property type="nucleotide sequence ID" value="XM_452466.1"/>
</dbReference>
<dbReference type="PDB" id="5H54">
    <property type="method" value="X-ray"/>
    <property type="resolution" value="3.10 A"/>
    <property type="chains" value="A=1-239"/>
</dbReference>
<dbReference type="PDB" id="5H55">
    <property type="method" value="X-ray"/>
    <property type="resolution" value="3.50 A"/>
    <property type="chains" value="A=1-305"/>
</dbReference>
<dbReference type="PDB" id="5H5A">
    <property type="method" value="X-ray"/>
    <property type="resolution" value="2.26 A"/>
    <property type="chains" value="A/B/C/D=1-239"/>
</dbReference>
<dbReference type="PDB" id="5H5C">
    <property type="method" value="X-ray"/>
    <property type="resolution" value="3.31 A"/>
    <property type="chains" value="A=1-239"/>
</dbReference>
<dbReference type="PDBsum" id="5H54"/>
<dbReference type="PDBsum" id="5H55"/>
<dbReference type="PDBsum" id="5H5A"/>
<dbReference type="PDBsum" id="5H5C"/>
<dbReference type="SMR" id="Q6CUC3"/>
<dbReference type="FunCoup" id="Q6CUC3">
    <property type="interactions" value="72"/>
</dbReference>
<dbReference type="STRING" id="284590.Q6CUC3"/>
<dbReference type="PaxDb" id="284590-Q6CUC3"/>
<dbReference type="KEGG" id="kla:KLLA0_C06028g"/>
<dbReference type="eggNOG" id="ENOG502QQS2">
    <property type="taxonomic scope" value="Eukaryota"/>
</dbReference>
<dbReference type="HOGENOM" id="CLU_026794_2_0_1"/>
<dbReference type="InParanoid" id="Q6CUC3"/>
<dbReference type="OMA" id="AAWPSWI"/>
<dbReference type="Proteomes" id="UP000000598">
    <property type="component" value="Chromosome C"/>
</dbReference>
<dbReference type="GO" id="GO:0005789">
    <property type="term" value="C:endoplasmic reticulum membrane"/>
    <property type="evidence" value="ECO:0007669"/>
    <property type="project" value="UniProtKB-SubCell"/>
</dbReference>
<dbReference type="GO" id="GO:0032865">
    <property type="term" value="C:ERMES complex"/>
    <property type="evidence" value="ECO:0007669"/>
    <property type="project" value="UniProtKB-UniRule"/>
</dbReference>
<dbReference type="GO" id="GO:0008289">
    <property type="term" value="F:lipid binding"/>
    <property type="evidence" value="ECO:0007669"/>
    <property type="project" value="UniProtKB-KW"/>
</dbReference>
<dbReference type="GO" id="GO:0000002">
    <property type="term" value="P:mitochondrial genome maintenance"/>
    <property type="evidence" value="ECO:0007669"/>
    <property type="project" value="UniProtKB-UniRule"/>
</dbReference>
<dbReference type="GO" id="GO:1990456">
    <property type="term" value="P:mitochondrion-endoplasmic reticulum membrane tethering"/>
    <property type="evidence" value="ECO:0007669"/>
    <property type="project" value="TreeGrafter"/>
</dbReference>
<dbReference type="GO" id="GO:0015914">
    <property type="term" value="P:phospholipid transport"/>
    <property type="evidence" value="ECO:0007669"/>
    <property type="project" value="TreeGrafter"/>
</dbReference>
<dbReference type="GO" id="GO:0045040">
    <property type="term" value="P:protein insertion into mitochondrial outer membrane"/>
    <property type="evidence" value="ECO:0007669"/>
    <property type="project" value="UniProtKB-UniRule"/>
</dbReference>
<dbReference type="CDD" id="cd21672">
    <property type="entry name" value="SMP_Mdm12"/>
    <property type="match status" value="1"/>
</dbReference>
<dbReference type="HAMAP" id="MF_03104">
    <property type="entry name" value="Mdm12"/>
    <property type="match status" value="1"/>
</dbReference>
<dbReference type="InterPro" id="IPR027532">
    <property type="entry name" value="Mdm12"/>
</dbReference>
<dbReference type="InterPro" id="IPR019411">
    <property type="entry name" value="MMM1_dom"/>
</dbReference>
<dbReference type="InterPro" id="IPR031468">
    <property type="entry name" value="SMP_LBD"/>
</dbReference>
<dbReference type="PANTHER" id="PTHR28204">
    <property type="entry name" value="MITOCHONDRIAL DISTRIBUTION AND MORPHOLOGY PROTEIN 12"/>
    <property type="match status" value="1"/>
</dbReference>
<dbReference type="PANTHER" id="PTHR28204:SF1">
    <property type="entry name" value="MITOCHONDRIAL DISTRIBUTION AND MORPHOLOGY PROTEIN 12"/>
    <property type="match status" value="1"/>
</dbReference>
<dbReference type="Pfam" id="PF10296">
    <property type="entry name" value="MMM1"/>
    <property type="match status" value="1"/>
</dbReference>
<dbReference type="PROSITE" id="PS51847">
    <property type="entry name" value="SMP"/>
    <property type="match status" value="1"/>
</dbReference>
<sequence length="305" mass="34373">MSVEIDWDNIRGDLSVNQGVKDFLNSRLQEFELPSYVNNLKVTNFDLGTMPPNVILKQMDDPLDEFYSYLLQEGDISKEAAKDKNTDVQLLVELDYKGDMSIELSADLVLNYPSPQFMILPVKLRISDIGMHCLCLLAYLKKQLFISFLCDVSDPLLENDKLQVDPSGPNFMGKRALERISLIRNIKIHTELGQLDQGEGSVLRSVGKLEEFLVDLFRNLIRKEAAWPSWIDLDFTPEDPEDPEEEGRENDLVADSSNDGKDIEMKSGTEETLGAGIQESVQHVSPAVTSIDQESRVNSNTSLEE</sequence>
<reference key="1">
    <citation type="journal article" date="2004" name="Nature">
        <title>Genome evolution in yeasts.</title>
        <authorList>
            <person name="Dujon B."/>
            <person name="Sherman D."/>
            <person name="Fischer G."/>
            <person name="Durrens P."/>
            <person name="Casaregola S."/>
            <person name="Lafontaine I."/>
            <person name="de Montigny J."/>
            <person name="Marck C."/>
            <person name="Neuveglise C."/>
            <person name="Talla E."/>
            <person name="Goffard N."/>
            <person name="Frangeul L."/>
            <person name="Aigle M."/>
            <person name="Anthouard V."/>
            <person name="Babour A."/>
            <person name="Barbe V."/>
            <person name="Barnay S."/>
            <person name="Blanchin S."/>
            <person name="Beckerich J.-M."/>
            <person name="Beyne E."/>
            <person name="Bleykasten C."/>
            <person name="Boisrame A."/>
            <person name="Boyer J."/>
            <person name="Cattolico L."/>
            <person name="Confanioleri F."/>
            <person name="de Daruvar A."/>
            <person name="Despons L."/>
            <person name="Fabre E."/>
            <person name="Fairhead C."/>
            <person name="Ferry-Dumazet H."/>
            <person name="Groppi A."/>
            <person name="Hantraye F."/>
            <person name="Hennequin C."/>
            <person name="Jauniaux N."/>
            <person name="Joyet P."/>
            <person name="Kachouri R."/>
            <person name="Kerrest A."/>
            <person name="Koszul R."/>
            <person name="Lemaire M."/>
            <person name="Lesur I."/>
            <person name="Ma L."/>
            <person name="Muller H."/>
            <person name="Nicaud J.-M."/>
            <person name="Nikolski M."/>
            <person name="Oztas S."/>
            <person name="Ozier-Kalogeropoulos O."/>
            <person name="Pellenz S."/>
            <person name="Potier S."/>
            <person name="Richard G.-F."/>
            <person name="Straub M.-L."/>
            <person name="Suleau A."/>
            <person name="Swennen D."/>
            <person name="Tekaia F."/>
            <person name="Wesolowski-Louvel M."/>
            <person name="Westhof E."/>
            <person name="Wirth B."/>
            <person name="Zeniou-Meyer M."/>
            <person name="Zivanovic Y."/>
            <person name="Bolotin-Fukuhara M."/>
            <person name="Thierry A."/>
            <person name="Bouchier C."/>
            <person name="Caudron B."/>
            <person name="Scarpelli C."/>
            <person name="Gaillardin C."/>
            <person name="Weissenbach J."/>
            <person name="Wincker P."/>
            <person name="Souciet J.-L."/>
        </authorList>
    </citation>
    <scope>NUCLEOTIDE SEQUENCE [LARGE SCALE GENOMIC DNA]</scope>
    <source>
        <strain>ATCC 8585 / CBS 2359 / DSM 70799 / NBRC 1267 / NRRL Y-1140 / WM37</strain>
    </source>
</reference>
<protein>
    <recommendedName>
        <fullName evidence="1">Mitochondrial distribution and morphology protein 12</fullName>
    </recommendedName>
    <alternativeName>
        <fullName evidence="1">Mitochondrial inheritance component MDM12</fullName>
    </alternativeName>
</protein>
<evidence type="ECO:0000255" key="1">
    <source>
        <dbReference type="HAMAP-Rule" id="MF_03104"/>
    </source>
</evidence>
<evidence type="ECO:0000256" key="2">
    <source>
        <dbReference type="SAM" id="MobiDB-lite"/>
    </source>
</evidence>
<evidence type="ECO:0007829" key="3">
    <source>
        <dbReference type="PDB" id="5H54"/>
    </source>
</evidence>
<evidence type="ECO:0007829" key="4">
    <source>
        <dbReference type="PDB" id="5H5A"/>
    </source>
</evidence>
<evidence type="ECO:0007829" key="5">
    <source>
        <dbReference type="PDB" id="5H5C"/>
    </source>
</evidence>
<feature type="chain" id="PRO_0000384288" description="Mitochondrial distribution and morphology protein 12">
    <location>
        <begin position="1"/>
        <end position="305"/>
    </location>
</feature>
<feature type="domain" description="SMP-LTD" evidence="1">
    <location>
        <begin position="1"/>
        <end position="236"/>
    </location>
</feature>
<feature type="region of interest" description="Disordered" evidence="2">
    <location>
        <begin position="233"/>
        <end position="305"/>
    </location>
</feature>
<feature type="compositionally biased region" description="Acidic residues" evidence="2">
    <location>
        <begin position="235"/>
        <end position="248"/>
    </location>
</feature>
<feature type="compositionally biased region" description="Basic and acidic residues" evidence="2">
    <location>
        <begin position="258"/>
        <end position="269"/>
    </location>
</feature>
<feature type="compositionally biased region" description="Polar residues" evidence="2">
    <location>
        <begin position="279"/>
        <end position="305"/>
    </location>
</feature>
<feature type="helix" evidence="4">
    <location>
        <begin position="7"/>
        <end position="12"/>
    </location>
</feature>
<feature type="helix" evidence="4">
    <location>
        <begin position="14"/>
        <end position="28"/>
    </location>
</feature>
<feature type="strand" evidence="4">
    <location>
        <begin position="37"/>
        <end position="46"/>
    </location>
</feature>
<feature type="strand" evidence="4">
    <location>
        <begin position="53"/>
        <end position="60"/>
    </location>
</feature>
<feature type="helix" evidence="4">
    <location>
        <begin position="64"/>
        <end position="66"/>
    </location>
</feature>
<feature type="strand" evidence="4">
    <location>
        <begin position="88"/>
        <end position="96"/>
    </location>
</feature>
<feature type="strand" evidence="4">
    <location>
        <begin position="101"/>
        <end position="110"/>
    </location>
</feature>
<feature type="strand" evidence="4">
    <location>
        <begin position="112"/>
        <end position="114"/>
    </location>
</feature>
<feature type="strand" evidence="4">
    <location>
        <begin position="118"/>
        <end position="140"/>
    </location>
</feature>
<feature type="strand" evidence="4">
    <location>
        <begin position="143"/>
        <end position="151"/>
    </location>
</feature>
<feature type="helix" evidence="4">
    <location>
        <begin position="155"/>
        <end position="158"/>
    </location>
</feature>
<feature type="strand" evidence="5">
    <location>
        <begin position="161"/>
        <end position="163"/>
    </location>
</feature>
<feature type="strand" evidence="3">
    <location>
        <begin position="166"/>
        <end position="168"/>
    </location>
</feature>
<feature type="turn" evidence="4">
    <location>
        <begin position="169"/>
        <end position="172"/>
    </location>
</feature>
<feature type="helix" evidence="4">
    <location>
        <begin position="174"/>
        <end position="178"/>
    </location>
</feature>
<feature type="strand" evidence="4">
    <location>
        <begin position="184"/>
        <end position="190"/>
    </location>
</feature>
<feature type="helix" evidence="4">
    <location>
        <begin position="202"/>
        <end position="224"/>
    </location>
</feature>
<feature type="strand" evidence="4">
    <location>
        <begin position="231"/>
        <end position="233"/>
    </location>
</feature>
<proteinExistence type="evidence at protein level"/>
<gene>
    <name evidence="1" type="primary">MDM12</name>
    <name type="ordered locus">KLLA0C06028g</name>
</gene>
<organism>
    <name type="scientific">Kluyveromyces lactis (strain ATCC 8585 / CBS 2359 / DSM 70799 / NBRC 1267 / NRRL Y-1140 / WM37)</name>
    <name type="common">Yeast</name>
    <name type="synonym">Candida sphaerica</name>
    <dbReference type="NCBI Taxonomy" id="284590"/>
    <lineage>
        <taxon>Eukaryota</taxon>
        <taxon>Fungi</taxon>
        <taxon>Dikarya</taxon>
        <taxon>Ascomycota</taxon>
        <taxon>Saccharomycotina</taxon>
        <taxon>Saccharomycetes</taxon>
        <taxon>Saccharomycetales</taxon>
        <taxon>Saccharomycetaceae</taxon>
        <taxon>Kluyveromyces</taxon>
    </lineage>
</organism>
<keyword id="KW-0002">3D-structure</keyword>
<keyword id="KW-0256">Endoplasmic reticulum</keyword>
<keyword id="KW-0445">Lipid transport</keyword>
<keyword id="KW-0446">Lipid-binding</keyword>
<keyword id="KW-0472">Membrane</keyword>
<keyword id="KW-0496">Mitochondrion</keyword>
<keyword id="KW-1000">Mitochondrion outer membrane</keyword>
<keyword id="KW-1185">Reference proteome</keyword>
<keyword id="KW-0813">Transport</keyword>
<name>MDM12_KLULA</name>
<comment type="function">
    <text evidence="1">Component of the ERMES/MDM complex, which serves as a molecular tether to connect the endoplasmic reticulum (ER) and mitochondria. Components of this complex are involved in the control of mitochondrial shape and protein biogenesis, and function in nonvesicular lipid trafficking between the ER and mitochondria. MDM12 is required for the interaction of the ER-resident membrane protein MMM1 and the outer mitochondrial membrane-resident beta-barrel protein MDM10. The MDM12-MMM1 subcomplex functions in the major beta-barrel assembly pathway that is responsible for biogenesis of all mitochondrial outer membrane beta-barrel proteins, and acts in a late step after the SAM complex. The MDM10-MDM12-MMM1 subcomplex further acts in the TOM40-specific pathway after the action of the MDM12-MMM1 complex. Essential for establishing and maintaining the structure of mitochondria and maintenance of mtDNA nucleoids.</text>
</comment>
<comment type="subunit">
    <text evidence="1">Component of the ER-mitochondria encounter structure (ERMES) or MDM complex, composed of MMM1, MDM10, MDM12 and MDM34. A MMM1 homodimer associates with one molecule of MDM12 on each side in a pairwise head-to-tail manner, and the SMP-LTD domains of MMM1 and MDM12 generate a continuous hydrophobic tunnel for phospholipid trafficking.</text>
</comment>
<comment type="subcellular location">
    <subcellularLocation>
        <location evidence="1">Mitochondrion outer membrane</location>
        <topology evidence="1">Peripheral membrane protein</topology>
        <orientation evidence="1">Cytoplasmic side</orientation>
    </subcellularLocation>
    <subcellularLocation>
        <location evidence="1">Endoplasmic reticulum membrane</location>
        <topology evidence="1">Peripheral membrane protein</topology>
        <orientation evidence="1">Cytoplasmic side</orientation>
    </subcellularLocation>
    <text evidence="1">The ERMES/MDM complex localizes to a few discrete foci (around 10 per single cell), that represent mitochondria-endoplasmic reticulum junctions. These foci are often found next to mtDNA nucleoids.</text>
</comment>
<comment type="domain">
    <text evidence="1">The SMP-LTD domain is a barrel-like domain that can bind various types of glycerophospholipids in its interior and mediate their transfer between two adjacent bilayers.</text>
</comment>
<comment type="similarity">
    <text evidence="1">Belongs to the MDM12 family.</text>
</comment>